<reference key="1">
    <citation type="journal article" date="2007" name="Science">
        <title>The Fusarium graminearum genome reveals a link between localized polymorphism and pathogen specialization.</title>
        <authorList>
            <person name="Cuomo C.A."/>
            <person name="Gueldener U."/>
            <person name="Xu J.-R."/>
            <person name="Trail F."/>
            <person name="Turgeon B.G."/>
            <person name="Di Pietro A."/>
            <person name="Walton J.D."/>
            <person name="Ma L.-J."/>
            <person name="Baker S.E."/>
            <person name="Rep M."/>
            <person name="Adam G."/>
            <person name="Antoniw J."/>
            <person name="Baldwin T."/>
            <person name="Calvo S.E."/>
            <person name="Chang Y.-L."/>
            <person name="DeCaprio D."/>
            <person name="Gale L.R."/>
            <person name="Gnerre S."/>
            <person name="Goswami R.S."/>
            <person name="Hammond-Kosack K."/>
            <person name="Harris L.J."/>
            <person name="Hilburn K."/>
            <person name="Kennell J.C."/>
            <person name="Kroken S."/>
            <person name="Magnuson J.K."/>
            <person name="Mannhaupt G."/>
            <person name="Mauceli E.W."/>
            <person name="Mewes H.-W."/>
            <person name="Mitterbauer R."/>
            <person name="Muehlbauer G."/>
            <person name="Muensterkoetter M."/>
            <person name="Nelson D."/>
            <person name="O'Donnell K."/>
            <person name="Ouellet T."/>
            <person name="Qi W."/>
            <person name="Quesneville H."/>
            <person name="Roncero M.I.G."/>
            <person name="Seong K.-Y."/>
            <person name="Tetko I.V."/>
            <person name="Urban M."/>
            <person name="Waalwijk C."/>
            <person name="Ward T.J."/>
            <person name="Yao J."/>
            <person name="Birren B.W."/>
            <person name="Kistler H.C."/>
        </authorList>
    </citation>
    <scope>NUCLEOTIDE SEQUENCE [LARGE SCALE GENOMIC DNA]</scope>
    <source>
        <strain>ATCC MYA-4620 / CBS 123657 / FGSC 9075 / NRRL 31084 / PH-1</strain>
    </source>
</reference>
<reference key="2">
    <citation type="journal article" date="2010" name="Nature">
        <title>Comparative genomics reveals mobile pathogenicity chromosomes in Fusarium.</title>
        <authorList>
            <person name="Ma L.-J."/>
            <person name="van der Does H.C."/>
            <person name="Borkovich K.A."/>
            <person name="Coleman J.J."/>
            <person name="Daboussi M.-J."/>
            <person name="Di Pietro A."/>
            <person name="Dufresne M."/>
            <person name="Freitag M."/>
            <person name="Grabherr M."/>
            <person name="Henrissat B."/>
            <person name="Houterman P.M."/>
            <person name="Kang S."/>
            <person name="Shim W.-B."/>
            <person name="Woloshuk C."/>
            <person name="Xie X."/>
            <person name="Xu J.-R."/>
            <person name="Antoniw J."/>
            <person name="Baker S.E."/>
            <person name="Bluhm B.H."/>
            <person name="Breakspear A."/>
            <person name="Brown D.W."/>
            <person name="Butchko R.A.E."/>
            <person name="Chapman S."/>
            <person name="Coulson R."/>
            <person name="Coutinho P.M."/>
            <person name="Danchin E.G.J."/>
            <person name="Diener A."/>
            <person name="Gale L.R."/>
            <person name="Gardiner D.M."/>
            <person name="Goff S."/>
            <person name="Hammond-Kosack K.E."/>
            <person name="Hilburn K."/>
            <person name="Hua-Van A."/>
            <person name="Jonkers W."/>
            <person name="Kazan K."/>
            <person name="Kodira C.D."/>
            <person name="Koehrsen M."/>
            <person name="Kumar L."/>
            <person name="Lee Y.-H."/>
            <person name="Li L."/>
            <person name="Manners J.M."/>
            <person name="Miranda-Saavedra D."/>
            <person name="Mukherjee M."/>
            <person name="Park G."/>
            <person name="Park J."/>
            <person name="Park S.-Y."/>
            <person name="Proctor R.H."/>
            <person name="Regev A."/>
            <person name="Ruiz-Roldan M.C."/>
            <person name="Sain D."/>
            <person name="Sakthikumar S."/>
            <person name="Sykes S."/>
            <person name="Schwartz D.C."/>
            <person name="Turgeon B.G."/>
            <person name="Wapinski I."/>
            <person name="Yoder O."/>
            <person name="Young S."/>
            <person name="Zeng Q."/>
            <person name="Zhou S."/>
            <person name="Galagan J."/>
            <person name="Cuomo C.A."/>
            <person name="Kistler H.C."/>
            <person name="Rep M."/>
        </authorList>
    </citation>
    <scope>GENOME REANNOTATION</scope>
    <source>
        <strain>ATCC MYA-4620 / CBS 123657 / FGSC 9075 / NRRL 31084 / PH-1</strain>
    </source>
</reference>
<reference key="3">
    <citation type="journal article" date="2015" name="BMC Genomics">
        <title>The completed genome sequence of the pathogenic ascomycete fungus Fusarium graminearum.</title>
        <authorList>
            <person name="King R."/>
            <person name="Urban M."/>
            <person name="Hammond-Kosack M.C.U."/>
            <person name="Hassani-Pak K."/>
            <person name="Hammond-Kosack K.E."/>
        </authorList>
    </citation>
    <scope>NUCLEOTIDE SEQUENCE [LARGE SCALE GENOMIC DNA]</scope>
    <source>
        <strain>ATCC MYA-4620 / CBS 123657 / FGSC 9075 / NRRL 31084 / PH-1</strain>
    </source>
</reference>
<comment type="function">
    <text evidence="1">The SPT4-SPT5 complex mediates both activation and inhibition of transcription elongation, and plays a role in pre-mRNA processing. This complex seems to be important for the stability of the RNA polymerase II elongation machinery on the chromatin template but not for the inherent ability of this machinery to translocate down the gene (By similarity).</text>
</comment>
<comment type="subunit">
    <text evidence="1">Component of the SPT4-SPT5 complex. Interacts with RNA polymerase II (By similarity).</text>
</comment>
<comment type="subcellular location">
    <subcellularLocation>
        <location evidence="1">Nucleus</location>
    </subcellularLocation>
</comment>
<comment type="similarity">
    <text evidence="3">Belongs to the SPT5 family.</text>
</comment>
<feature type="chain" id="PRO_0000238562" description="Transcription elongation factor SPT5">
    <location>
        <begin position="1"/>
        <end position="1042"/>
    </location>
</feature>
<feature type="region of interest" description="Disordered" evidence="2">
    <location>
        <begin position="1"/>
        <end position="177"/>
    </location>
</feature>
<feature type="region of interest" description="Disordered" evidence="2">
    <location>
        <begin position="361"/>
        <end position="380"/>
    </location>
</feature>
<feature type="region of interest" description="Disordered" evidence="2">
    <location>
        <begin position="807"/>
        <end position="963"/>
    </location>
</feature>
<feature type="region of interest" description="Disordered" evidence="2">
    <location>
        <begin position="984"/>
        <end position="1042"/>
    </location>
</feature>
<feature type="compositionally biased region" description="Basic and acidic residues" evidence="2">
    <location>
        <begin position="1"/>
        <end position="10"/>
    </location>
</feature>
<feature type="compositionally biased region" description="Acidic residues" evidence="2">
    <location>
        <begin position="64"/>
        <end position="77"/>
    </location>
</feature>
<feature type="compositionally biased region" description="Acidic residues" evidence="2">
    <location>
        <begin position="84"/>
        <end position="100"/>
    </location>
</feature>
<feature type="compositionally biased region" description="Acidic residues" evidence="2">
    <location>
        <begin position="119"/>
        <end position="140"/>
    </location>
</feature>
<feature type="compositionally biased region" description="Basic and acidic residues" evidence="2">
    <location>
        <begin position="157"/>
        <end position="177"/>
    </location>
</feature>
<feature type="compositionally biased region" description="Gly residues" evidence="2">
    <location>
        <begin position="807"/>
        <end position="820"/>
    </location>
</feature>
<feature type="compositionally biased region" description="Low complexity" evidence="2">
    <location>
        <begin position="1002"/>
        <end position="1027"/>
    </location>
</feature>
<accession>Q4I5I4</accession>
<accession>A0A0E0S955</accession>
<accession>V6RGT2</accession>
<sequence length="1042" mass="113135">MSSHDPSRFDDSEDEEDFNPAPADLSDEEQDDDHQKVKRGSSPAPRDDDDDEDERPSKSRHADDDEEEEEEEEEEEDTGRRRDDDDDEDEEEEDEEDEDIQQGHRRKRRKERGANFFDIEAEVDDEDEGEDDEMLGEEIGDFITNDHPDDIAETGDDDRRHRELDRRRDMDSSMDAEKQAEILRQRYGNRRSGKGFRDVSVVPKRLLLPSVDDPSIWAVRCKEGKEREVVFSIMKRIEERAGTKDELAITAAFERGGIESVMKGFVYVEARRQTDILKGLDSMMNVYPHSKMILVDIKDMPELFRISKTPTLEPGAWVRLRRPPKHNGDLAQVIDVTENGLEARVRFIPRLDYGMRDDALSADGKRKRPFGNGPKPPQRLFSEIEARKRNPRAIQGNPSTGTWTYNNEEFENGFQVRDVKIQQLTVTDVNPSLEEVTRFASGAEDGTENLDLKALAHSLKDSNALATYLPGDVVEVYTGEQKGVVGKAMRVHSDVVSITVTEGELVGQEIDVPIRALRKRFNVGDHVKVIGGSKFRDEVGMVVNIRDDKVTILTDQTNTEITVFSKDLREASDIGGQGSLGQYSLHDLVQLDPTTVGCVVKVDRESLVALDQFGTPRQVMPSQISNKIPKRKTAVAVDRHGSEIRLEDVVKEYTGQQRQGKIIHIHRSYIFLHSNDNKEHAGVFVTKANMVNTVAAKGGRVNTAAATGPDLTAMNPALKLHKNGSENKPVPPPRSFGKDKAIEQTVVIKKGAYKGLLGIVKDTTDTHARVELHTKSKTITVPKDCLAFKNRMTGATIDIASRGGRGGYGGGAGRGGGGDRVPGWQSGSRTPMAGGNSDRVPAWGSRTPAASGRTPAWKAQDMSGARTPAWADGSRTVNPYDGSRTAYGSGGRTPAWQAGGRTPAPGDAFGAGSRTPAYGGGDSWGSGSKTPAWGVTAPTPGASGGDAWGPGSYDAPTPGGALGAPTPGAMNAPTPGAYSAPTPAAISAPTPGGWQGGWGADSAPTPAAGAPTPGYYGAPTPGASYGPPETPAATGPRYTDDD</sequence>
<gene>
    <name type="primary">SPT5</name>
    <name type="ORF">FGRRES_07524</name>
    <name type="ORF">FGSG_07524</name>
</gene>
<protein>
    <recommendedName>
        <fullName>Transcription elongation factor SPT5</fullName>
    </recommendedName>
    <alternativeName>
        <fullName>Chromatin elongation factor SPT5</fullName>
    </alternativeName>
</protein>
<organism>
    <name type="scientific">Gibberella zeae (strain ATCC MYA-4620 / CBS 123657 / FGSC 9075 / NRRL 31084 / PH-1)</name>
    <name type="common">Wheat head blight fungus</name>
    <name type="synonym">Fusarium graminearum</name>
    <dbReference type="NCBI Taxonomy" id="229533"/>
    <lineage>
        <taxon>Eukaryota</taxon>
        <taxon>Fungi</taxon>
        <taxon>Dikarya</taxon>
        <taxon>Ascomycota</taxon>
        <taxon>Pezizomycotina</taxon>
        <taxon>Sordariomycetes</taxon>
        <taxon>Hypocreomycetidae</taxon>
        <taxon>Hypocreales</taxon>
        <taxon>Nectriaceae</taxon>
        <taxon>Fusarium</taxon>
    </lineage>
</organism>
<proteinExistence type="inferred from homology"/>
<name>SPT5_GIBZE</name>
<evidence type="ECO:0000250" key="1"/>
<evidence type="ECO:0000256" key="2">
    <source>
        <dbReference type="SAM" id="MobiDB-lite"/>
    </source>
</evidence>
<evidence type="ECO:0000305" key="3"/>
<dbReference type="EMBL" id="DS231666">
    <property type="protein sequence ID" value="ESU13793.1"/>
    <property type="molecule type" value="Genomic_DNA"/>
</dbReference>
<dbReference type="EMBL" id="HG970335">
    <property type="protein sequence ID" value="CEF82968.1"/>
    <property type="molecule type" value="Genomic_DNA"/>
</dbReference>
<dbReference type="RefSeq" id="XP_011327300.1">
    <property type="nucleotide sequence ID" value="XM_011328998.1"/>
</dbReference>
<dbReference type="SMR" id="Q4I5I4"/>
<dbReference type="FunCoup" id="Q4I5I4">
    <property type="interactions" value="1278"/>
</dbReference>
<dbReference type="STRING" id="229533.Q4I5I4"/>
<dbReference type="GeneID" id="23554596"/>
<dbReference type="KEGG" id="fgr:FGSG_07524"/>
<dbReference type="VEuPathDB" id="FungiDB:FGRAMPH1_01G25015"/>
<dbReference type="eggNOG" id="KOG1999">
    <property type="taxonomic scope" value="Eukaryota"/>
</dbReference>
<dbReference type="HOGENOM" id="CLU_003537_1_1_1"/>
<dbReference type="InParanoid" id="Q4I5I4"/>
<dbReference type="OrthoDB" id="114801at110618"/>
<dbReference type="Proteomes" id="UP000070720">
    <property type="component" value="Chromosome 4"/>
</dbReference>
<dbReference type="GO" id="GO:0032044">
    <property type="term" value="C:DSIF complex"/>
    <property type="evidence" value="ECO:0007669"/>
    <property type="project" value="TreeGrafter"/>
</dbReference>
<dbReference type="GO" id="GO:0003729">
    <property type="term" value="F:mRNA binding"/>
    <property type="evidence" value="ECO:0007669"/>
    <property type="project" value="TreeGrafter"/>
</dbReference>
<dbReference type="GO" id="GO:0006397">
    <property type="term" value="P:mRNA processing"/>
    <property type="evidence" value="ECO:0007669"/>
    <property type="project" value="UniProtKB-KW"/>
</dbReference>
<dbReference type="GO" id="GO:0032784">
    <property type="term" value="P:regulation of DNA-templated transcription elongation"/>
    <property type="evidence" value="ECO:0007669"/>
    <property type="project" value="InterPro"/>
</dbReference>
<dbReference type="GO" id="GO:0006357">
    <property type="term" value="P:regulation of transcription by RNA polymerase II"/>
    <property type="evidence" value="ECO:0007669"/>
    <property type="project" value="InterPro"/>
</dbReference>
<dbReference type="GO" id="GO:0006368">
    <property type="term" value="P:transcription elongation by RNA polymerase II"/>
    <property type="evidence" value="ECO:0007669"/>
    <property type="project" value="TreeGrafter"/>
</dbReference>
<dbReference type="CDD" id="cd06081">
    <property type="entry name" value="KOW_Spt5_1"/>
    <property type="match status" value="1"/>
</dbReference>
<dbReference type="CDD" id="cd06082">
    <property type="entry name" value="KOW_Spt5_2"/>
    <property type="match status" value="1"/>
</dbReference>
<dbReference type="CDD" id="cd06083">
    <property type="entry name" value="KOW_Spt5_3"/>
    <property type="match status" value="1"/>
</dbReference>
<dbReference type="CDD" id="cd06084">
    <property type="entry name" value="KOW_Spt5_4"/>
    <property type="match status" value="1"/>
</dbReference>
<dbReference type="CDD" id="cd06085">
    <property type="entry name" value="KOW_Spt5_5"/>
    <property type="match status" value="1"/>
</dbReference>
<dbReference type="CDD" id="cd09888">
    <property type="entry name" value="NGN_Euk"/>
    <property type="match status" value="1"/>
</dbReference>
<dbReference type="FunFam" id="2.30.30.30:FF:000018">
    <property type="entry name" value="Transcription elongation factor SPT5"/>
    <property type="match status" value="1"/>
</dbReference>
<dbReference type="FunFam" id="2.30.30.30:FF:000029">
    <property type="entry name" value="Transcription elongation factor SPT5"/>
    <property type="match status" value="1"/>
</dbReference>
<dbReference type="FunFam" id="2.30.30.30:FF:000054">
    <property type="entry name" value="Transcription elongation factor SPT5"/>
    <property type="match status" value="1"/>
</dbReference>
<dbReference type="FunFam" id="3.30.70.940:FF:000005">
    <property type="entry name" value="Transcription elongation factor SPT5"/>
    <property type="match status" value="1"/>
</dbReference>
<dbReference type="Gene3D" id="2.30.30.30">
    <property type="match status" value="3"/>
</dbReference>
<dbReference type="Gene3D" id="3.30.70.940">
    <property type="entry name" value="NusG, N-terminal domain"/>
    <property type="match status" value="1"/>
</dbReference>
<dbReference type="InterPro" id="IPR005824">
    <property type="entry name" value="KOW"/>
</dbReference>
<dbReference type="InterPro" id="IPR041973">
    <property type="entry name" value="KOW_Spt5_1"/>
</dbReference>
<dbReference type="InterPro" id="IPR041975">
    <property type="entry name" value="KOW_Spt5_2"/>
</dbReference>
<dbReference type="InterPro" id="IPR041976">
    <property type="entry name" value="KOW_Spt5_3"/>
</dbReference>
<dbReference type="InterPro" id="IPR041977">
    <property type="entry name" value="KOW_Spt5_4"/>
</dbReference>
<dbReference type="InterPro" id="IPR041978">
    <property type="entry name" value="KOW_Spt5_5"/>
</dbReference>
<dbReference type="InterPro" id="IPR005100">
    <property type="entry name" value="NGN-domain"/>
</dbReference>
<dbReference type="InterPro" id="IPR036735">
    <property type="entry name" value="NGN_dom_sf"/>
</dbReference>
<dbReference type="InterPro" id="IPR039385">
    <property type="entry name" value="NGN_Euk"/>
</dbReference>
<dbReference type="InterPro" id="IPR014722">
    <property type="entry name" value="Rib_uL2_dom2"/>
</dbReference>
<dbReference type="InterPro" id="IPR039659">
    <property type="entry name" value="SPT5"/>
</dbReference>
<dbReference type="InterPro" id="IPR024945">
    <property type="entry name" value="Spt5_C_dom"/>
</dbReference>
<dbReference type="InterPro" id="IPR022581">
    <property type="entry name" value="Spt5_N"/>
</dbReference>
<dbReference type="InterPro" id="IPR017071">
    <property type="entry name" value="TF_Spt5_eukaryote"/>
</dbReference>
<dbReference type="InterPro" id="IPR008991">
    <property type="entry name" value="Translation_prot_SH3-like_sf"/>
</dbReference>
<dbReference type="PANTHER" id="PTHR11125">
    <property type="entry name" value="SUPPRESSOR OF TY 5"/>
    <property type="match status" value="1"/>
</dbReference>
<dbReference type="PANTHER" id="PTHR11125:SF7">
    <property type="entry name" value="TRANSCRIPTION ELONGATION FACTOR SPT5"/>
    <property type="match status" value="1"/>
</dbReference>
<dbReference type="Pfam" id="PF12815">
    <property type="entry name" value="CTD"/>
    <property type="match status" value="1"/>
</dbReference>
<dbReference type="Pfam" id="PF23042">
    <property type="entry name" value="KOW1_SPT5"/>
    <property type="match status" value="1"/>
</dbReference>
<dbReference type="Pfam" id="PF23284">
    <property type="entry name" value="KOW2_Spt5"/>
    <property type="match status" value="1"/>
</dbReference>
<dbReference type="Pfam" id="PF23291">
    <property type="entry name" value="KOW4_SPT5"/>
    <property type="match status" value="1"/>
</dbReference>
<dbReference type="Pfam" id="PF23290">
    <property type="entry name" value="KOW5_SPT5"/>
    <property type="match status" value="1"/>
</dbReference>
<dbReference type="Pfam" id="PF23037">
    <property type="entry name" value="KOWx_SPT5"/>
    <property type="match status" value="1"/>
</dbReference>
<dbReference type="Pfam" id="PF03439">
    <property type="entry name" value="Spt5-NGN"/>
    <property type="match status" value="1"/>
</dbReference>
<dbReference type="Pfam" id="PF11942">
    <property type="entry name" value="Spt5_N"/>
    <property type="match status" value="1"/>
</dbReference>
<dbReference type="PIRSF" id="PIRSF036945">
    <property type="entry name" value="Spt5"/>
    <property type="match status" value="1"/>
</dbReference>
<dbReference type="SMART" id="SM01104">
    <property type="entry name" value="CTD"/>
    <property type="match status" value="1"/>
</dbReference>
<dbReference type="SMART" id="SM00739">
    <property type="entry name" value="KOW"/>
    <property type="match status" value="3"/>
</dbReference>
<dbReference type="SUPFAM" id="SSF50104">
    <property type="entry name" value="Translation proteins SH3-like domain"/>
    <property type="match status" value="1"/>
</dbReference>
<keyword id="KW-0507">mRNA processing</keyword>
<keyword id="KW-0539">Nucleus</keyword>
<keyword id="KW-1185">Reference proteome</keyword>
<keyword id="KW-0804">Transcription</keyword>